<name>PQQB_GLUDA</name>
<keyword id="KW-0884">PQQ biosynthesis</keyword>
<keyword id="KW-1185">Reference proteome</keyword>
<keyword id="KW-0813">Transport</keyword>
<organism>
    <name type="scientific">Gluconacetobacter diazotrophicus (strain ATCC 49037 / DSM 5601 / CCUG 37298 / CIP 103539 / LMG 7603 / PAl5)</name>
    <dbReference type="NCBI Taxonomy" id="272568"/>
    <lineage>
        <taxon>Bacteria</taxon>
        <taxon>Pseudomonadati</taxon>
        <taxon>Pseudomonadota</taxon>
        <taxon>Alphaproteobacteria</taxon>
        <taxon>Acetobacterales</taxon>
        <taxon>Acetobacteraceae</taxon>
        <taxon>Gluconacetobacter</taxon>
    </lineage>
</organism>
<accession>A9HEC4</accession>
<accession>B5ZCT3</accession>
<feature type="chain" id="PRO_1000082782" description="Coenzyme PQQ synthesis protein B">
    <location>
        <begin position="1"/>
        <end position="307"/>
    </location>
</feature>
<dbReference type="EMBL" id="AM889285">
    <property type="protein sequence ID" value="CAP55213.1"/>
    <property type="molecule type" value="Genomic_DNA"/>
</dbReference>
<dbReference type="EMBL" id="CP001189">
    <property type="protein sequence ID" value="ACI51741.1"/>
    <property type="molecule type" value="Genomic_DNA"/>
</dbReference>
<dbReference type="RefSeq" id="WP_012224449.1">
    <property type="nucleotide sequence ID" value="NC_010125.1"/>
</dbReference>
<dbReference type="SMR" id="A9HEC4"/>
<dbReference type="STRING" id="272568.GDI1270"/>
<dbReference type="KEGG" id="gdi:GDI1270"/>
<dbReference type="KEGG" id="gdj:Gdia_1981"/>
<dbReference type="eggNOG" id="COG1235">
    <property type="taxonomic scope" value="Bacteria"/>
</dbReference>
<dbReference type="HOGENOM" id="CLU_061120_0_0_5"/>
<dbReference type="OrthoDB" id="9778305at2"/>
<dbReference type="UniPathway" id="UPA00539"/>
<dbReference type="Proteomes" id="UP000001176">
    <property type="component" value="Chromosome"/>
</dbReference>
<dbReference type="GO" id="GO:0018189">
    <property type="term" value="P:pyrroloquinoline quinone biosynthetic process"/>
    <property type="evidence" value="ECO:0007669"/>
    <property type="project" value="UniProtKB-UniRule"/>
</dbReference>
<dbReference type="CDD" id="cd16274">
    <property type="entry name" value="PQQB-like_MBL-fold"/>
    <property type="match status" value="1"/>
</dbReference>
<dbReference type="Gene3D" id="3.60.15.10">
    <property type="entry name" value="Ribonuclease Z/Hydroxyacylglutathione hydrolase-like"/>
    <property type="match status" value="1"/>
</dbReference>
<dbReference type="HAMAP" id="MF_00653">
    <property type="entry name" value="PQQ_syn_PqqB"/>
    <property type="match status" value="1"/>
</dbReference>
<dbReference type="InterPro" id="IPR001279">
    <property type="entry name" value="Metallo-B-lactamas"/>
</dbReference>
<dbReference type="InterPro" id="IPR011842">
    <property type="entry name" value="PQQ_synth_PqqB"/>
</dbReference>
<dbReference type="InterPro" id="IPR036866">
    <property type="entry name" value="RibonucZ/Hydroxyglut_hydro"/>
</dbReference>
<dbReference type="NCBIfam" id="TIGR02108">
    <property type="entry name" value="PQQ_syn_pqqB"/>
    <property type="match status" value="1"/>
</dbReference>
<dbReference type="PANTHER" id="PTHR42663:SF7">
    <property type="entry name" value="COENZYME PQQ SYNTHESIS PROTEIN B"/>
    <property type="match status" value="1"/>
</dbReference>
<dbReference type="PANTHER" id="PTHR42663">
    <property type="entry name" value="HYDROLASE C777.06C-RELATED-RELATED"/>
    <property type="match status" value="1"/>
</dbReference>
<dbReference type="Pfam" id="PF12706">
    <property type="entry name" value="Lactamase_B_2"/>
    <property type="match status" value="1"/>
</dbReference>
<dbReference type="SUPFAM" id="SSF56281">
    <property type="entry name" value="Metallo-hydrolase/oxidoreductase"/>
    <property type="match status" value="1"/>
</dbReference>
<gene>
    <name evidence="1" type="primary">pqqB</name>
    <name type="ordered locus">GDI1270</name>
    <name type="ordered locus">Gdia_1981</name>
</gene>
<evidence type="ECO:0000255" key="1">
    <source>
        <dbReference type="HAMAP-Rule" id="MF_00653"/>
    </source>
</evidence>
<reference key="1">
    <citation type="journal article" date="2009" name="BMC Genomics">
        <title>Complete genome sequence of the sugarcane nitrogen-fixing endophyte Gluconacetobacter diazotrophicus Pal5.</title>
        <authorList>
            <person name="Bertalan M."/>
            <person name="Albano R."/>
            <person name="de Padua V."/>
            <person name="Rouws L."/>
            <person name="Rojas C."/>
            <person name="Hemerly A."/>
            <person name="Teixeira K."/>
            <person name="Schwab S."/>
            <person name="Araujo J."/>
            <person name="Oliveira A."/>
            <person name="Franca L."/>
            <person name="Magalhaes V."/>
            <person name="Alqueres S."/>
            <person name="Cardoso A."/>
            <person name="Almeida W."/>
            <person name="Loureiro M.M."/>
            <person name="Nogueira E."/>
            <person name="Cidade D."/>
            <person name="Oliveira D."/>
            <person name="Simao T."/>
            <person name="Macedo J."/>
            <person name="Valadao A."/>
            <person name="Dreschsel M."/>
            <person name="Freitas F."/>
            <person name="Vidal M."/>
            <person name="Guedes H."/>
            <person name="Rodrigues E."/>
            <person name="Meneses C."/>
            <person name="Brioso P."/>
            <person name="Pozzer L."/>
            <person name="Figueiredo D."/>
            <person name="Montano H."/>
            <person name="Junior J."/>
            <person name="de Souza Filho G."/>
            <person name="Martin Quintana Flores V."/>
            <person name="Ferreira B."/>
            <person name="Branco A."/>
            <person name="Gonzalez P."/>
            <person name="Guillobel H."/>
            <person name="Lemos M."/>
            <person name="Seibel L."/>
            <person name="Macedo J."/>
            <person name="Alves-Ferreira M."/>
            <person name="Sachetto-Martins G."/>
            <person name="Coelho A."/>
            <person name="Santos E."/>
            <person name="Amaral G."/>
            <person name="Neves A."/>
            <person name="Pacheco A.B."/>
            <person name="Carvalho D."/>
            <person name="Lery L."/>
            <person name="Bisch P."/>
            <person name="Rossle S.C."/>
            <person name="Urmenyi T."/>
            <person name="Rael Pereira A."/>
            <person name="Silva R."/>
            <person name="Rondinelli E."/>
            <person name="von Kruger W."/>
            <person name="Martins O."/>
            <person name="Baldani J.I."/>
            <person name="Ferreira P.C."/>
        </authorList>
    </citation>
    <scope>NUCLEOTIDE SEQUENCE [LARGE SCALE GENOMIC DNA]</scope>
    <source>
        <strain>ATCC 49037 / DSM 5601 / CCUG 37298 / CIP 103539 / LMG 7603 / PAl5</strain>
    </source>
</reference>
<reference key="2">
    <citation type="journal article" date="2010" name="Stand. Genomic Sci.">
        <title>Two genome sequences of the same bacterial strain, Gluconacetobacter diazotrophicus PAl 5, suggest a new standard in genome sequence submission.</title>
        <authorList>
            <person name="Giongo A."/>
            <person name="Tyler H.L."/>
            <person name="Zipperer U.N."/>
            <person name="Triplett E.W."/>
        </authorList>
    </citation>
    <scope>NUCLEOTIDE SEQUENCE [LARGE SCALE GENOMIC DNA]</scope>
    <source>
        <strain>ATCC 49037 / DSM 5601 / CCUG 37298 / CIP 103539 / LMG 7603 / PAl5</strain>
    </source>
</reference>
<sequence>MIDLIVLGAAAGGGFPQWNSNAPACRRARADDPAAPSRTQASIAVSGDGAHWFVVNASPDLRAQIGQTPALHPRHGLRSTPIAGVILTGGEVDTVTGLLTLRERQPFTLLATPPVLDLLDANPIFEALDRSIVPRVPLALDQPFALALPDGTPAGLTITPFAVPGKVPLYAESGPDPAAIVENGETIGLAMTDGVRHAYFIPGCARMTGPLRARLRGADLVFFDGTLWTDDEMLRAGVGQKTGQRMGHMSVSGDGGTIDAFADLDVRRKVLIHINNSNPLLLADSPERQVAHQAGWEVSFDGMRITT</sequence>
<comment type="function">
    <text evidence="1">May be involved in the transport of PQQ or its precursor to the periplasm.</text>
</comment>
<comment type="pathway">
    <text evidence="1">Cofactor biosynthesis; pyrroloquinoline quinone biosynthesis.</text>
</comment>
<comment type="similarity">
    <text evidence="1">Belongs to the PqqB family.</text>
</comment>
<protein>
    <recommendedName>
        <fullName evidence="1">Coenzyme PQQ synthesis protein B</fullName>
    </recommendedName>
    <alternativeName>
        <fullName evidence="1">Pyrroloquinoline quinone biosynthesis protein B</fullName>
    </alternativeName>
</protein>
<proteinExistence type="inferred from homology"/>